<comment type="function">
    <text evidence="1 4">Plays a major role in the shutoff of the host protein expression by cleaving mRNAs probably via an endonuclease activity. This host shutoff allows the virus to escape from the host antiviral response (By similarity). Hijacks host RNA splicing machinery to selectively target host RNAs containing introns for destruction. This may explain the preferential degradation of RNAs that have undergone co- or post-transcriptional processing (By similarity).</text>
</comment>
<comment type="subcellular location">
    <subcellularLocation>
        <location evidence="4">Host cytoplasm</location>
    </subcellularLocation>
    <subcellularLocation>
        <location evidence="4">Host nucleus</location>
    </subcellularLocation>
</comment>
<comment type="alternative products">
    <event type="ribosomal frameshifting"/>
    <isoform>
        <id>P0DJT4-1</id>
        <name>PA-X</name>
        <sequence type="displayed"/>
    </isoform>
    <isoform>
        <id>Q2VNE6-1</id>
        <name>PA</name>
        <sequence type="external"/>
    </isoform>
</comment>
<comment type="domain">
    <text evidence="1 4">The probable endonuclease active site in the N-terminus and the basic amino acid cluster in the C-terminus are important for the shutoff activity. The C-terminus acts as a nuclear localization signal (By similarity). The C-terminus is recruited to host protein complexes involved in nuclear Pol II RNA processing (By similarity).</text>
</comment>
<comment type="similarity">
    <text evidence="6">Belongs to the influenza viruses PA-X family.</text>
</comment>
<proteinExistence type="inferred from homology"/>
<evidence type="ECO:0000250" key="1">
    <source>
        <dbReference type="UniProtKB" id="P0CK64"/>
    </source>
</evidence>
<evidence type="ECO:0000250" key="2">
    <source>
        <dbReference type="UniProtKB" id="P0CK68"/>
    </source>
</evidence>
<evidence type="ECO:0000250" key="3">
    <source>
        <dbReference type="UniProtKB" id="P0DJW8"/>
    </source>
</evidence>
<evidence type="ECO:0000250" key="4">
    <source>
        <dbReference type="UniProtKB" id="P0DXO5"/>
    </source>
</evidence>
<evidence type="ECO:0000250" key="5">
    <source>
        <dbReference type="UniProtKB" id="P0DXO6"/>
    </source>
</evidence>
<evidence type="ECO:0000305" key="6"/>
<keyword id="KW-1132">Decay of host mRNAs by virus</keyword>
<keyword id="KW-1262">Eukaryotic host gene expression shutoff by virus</keyword>
<keyword id="KW-1035">Host cytoplasm</keyword>
<keyword id="KW-1190">Host gene expression shutoff by virus</keyword>
<keyword id="KW-1192">Host mRNA suppression by virus</keyword>
<keyword id="KW-1048">Host nucleus</keyword>
<keyword id="KW-0945">Host-virus interaction</keyword>
<keyword id="KW-0688">Ribosomal frameshifting</keyword>
<name>PAX_I78A7</name>
<organism>
    <name type="scientific">Influenza A virus (strain A/Memphis/2/1978 H3N2)</name>
    <dbReference type="NCBI Taxonomy" id="383580"/>
    <lineage>
        <taxon>Viruses</taxon>
        <taxon>Riboviria</taxon>
        <taxon>Orthornavirae</taxon>
        <taxon>Negarnaviricota</taxon>
        <taxon>Polyploviricotina</taxon>
        <taxon>Insthoviricetes</taxon>
        <taxon>Articulavirales</taxon>
        <taxon>Orthomyxoviridae</taxon>
        <taxon>Alphainfluenzavirus</taxon>
        <taxon>Alphainfluenzavirus influenzae</taxon>
        <taxon>Influenza A virus</taxon>
    </lineage>
</organism>
<reference key="1">
    <citation type="submission" date="2005-12" db="EMBL/GenBank/DDBJ databases">
        <title>The NIAID influenza genome sequencing project.</title>
        <authorList>
            <person name="Ghedin E."/>
            <person name="Spiro D."/>
            <person name="Miller N."/>
            <person name="Zaborsky J."/>
            <person name="Feldblyum T."/>
            <person name="Subbu V."/>
            <person name="Shumway M."/>
            <person name="Sparenborg J."/>
            <person name="Groveman L."/>
            <person name="Halpin R."/>
            <person name="Sitz J."/>
            <person name="Koo H."/>
            <person name="Salzberg S.L."/>
            <person name="Webster R.G."/>
            <person name="Hoffmann E."/>
            <person name="Krauss S."/>
            <person name="Naeve C."/>
            <person name="Bao Y."/>
            <person name="Bolotov P."/>
            <person name="Dernovoy D."/>
            <person name="Kiryutin B."/>
            <person name="Lipman D.J."/>
            <person name="Tatusova T."/>
        </authorList>
    </citation>
    <scope>NUCLEOTIDE SEQUENCE [GENOMIC RNA]</scope>
</reference>
<protein>
    <recommendedName>
        <fullName>Protein PA-X</fullName>
    </recommendedName>
</protein>
<sequence length="252" mass="29391">MEDFVRQCFNPMIVELAEKAMKEYGEDLKIETNKFAAICTHLEVCFMYSDFHFINEQGESIVVELDDPNALLKHRFEIIEGRDRTMAWTVVNSICNTTGAEKPKFLPDLYDYKENRFIEIGVTRREVHIYYLEKANKIKSENTHIHIFSFTGEEMATKADYTLDEESRARIKTRLFTIRQEMANRGLWDSFVSPKEAKKQLKKDLKSQELCAGLPTKVSRRTSPALRILEPMWMDSNRTAALRASFLKCPKK</sequence>
<dbReference type="EMBL" id="CY006696">
    <property type="status" value="NOT_ANNOTATED_CDS"/>
    <property type="molecule type" value="Genomic_RNA"/>
</dbReference>
<dbReference type="SMR" id="P0DJT4"/>
<dbReference type="Proteomes" id="UP000007555">
    <property type="component" value="Genome"/>
</dbReference>
<dbReference type="GO" id="GO:0003723">
    <property type="term" value="F:RNA binding"/>
    <property type="evidence" value="ECO:0007669"/>
    <property type="project" value="InterPro"/>
</dbReference>
<dbReference type="GO" id="GO:0039694">
    <property type="term" value="P:viral RNA genome replication"/>
    <property type="evidence" value="ECO:0007669"/>
    <property type="project" value="InterPro"/>
</dbReference>
<dbReference type="GO" id="GO:0075523">
    <property type="term" value="P:viral translational frameshifting"/>
    <property type="evidence" value="ECO:0007669"/>
    <property type="project" value="UniProtKB-KW"/>
</dbReference>
<dbReference type="FunFam" id="3.40.91.90:FF:000001">
    <property type="entry name" value="Polymerase acidic protein"/>
    <property type="match status" value="1"/>
</dbReference>
<dbReference type="Gene3D" id="3.40.91.90">
    <property type="entry name" value="Influenza RNA-dependent RNA polymerase subunit PA, endonuclease domain"/>
    <property type="match status" value="1"/>
</dbReference>
<dbReference type="InterPro" id="IPR001009">
    <property type="entry name" value="PA/PA-X"/>
</dbReference>
<dbReference type="InterPro" id="IPR038372">
    <property type="entry name" value="PA/PA-X_sf"/>
</dbReference>
<dbReference type="Pfam" id="PF00603">
    <property type="entry name" value="Flu_PA"/>
    <property type="match status" value="1"/>
</dbReference>
<feature type="chain" id="PRO_0000419397" description="Protein PA-X">
    <location>
        <begin position="1"/>
        <end position="252"/>
    </location>
</feature>
<feature type="active site" evidence="2">
    <location>
        <position position="80"/>
    </location>
</feature>
<feature type="active site" evidence="2">
    <location>
        <position position="108"/>
    </location>
</feature>
<feature type="site" description="Important for efficient shutoff activity" evidence="5">
    <location>
        <position position="28"/>
    </location>
</feature>
<feature type="site" description="Important for efficient shutoff activity" evidence="5">
    <location>
        <position position="65"/>
    </location>
</feature>
<feature type="site" description="Important for efficient shutoff activity and nuclear localization" evidence="4">
    <location>
        <position position="195"/>
    </location>
</feature>
<feature type="site" description="Important for efficient shutoff activity and nuclear localization" evidence="4">
    <location>
        <position position="198"/>
    </location>
</feature>
<feature type="site" description="Important for efficient shutoff activity and nuclear localization" evidence="4">
    <location>
        <position position="199"/>
    </location>
</feature>
<feature type="site" description="Important for efficient shutoff activity" evidence="3">
    <location>
        <position position="202"/>
    </location>
</feature>
<feature type="site" description="Important for efficient shutoff activity" evidence="3">
    <location>
        <position position="203"/>
    </location>
</feature>
<feature type="site" description="Important for efficient shutoff activity" evidence="3">
    <location>
        <position position="206"/>
    </location>
</feature>
<organismHost>
    <name type="scientific">Aves</name>
    <dbReference type="NCBI Taxonomy" id="8782"/>
</organismHost>
<organismHost>
    <name type="scientific">Cetacea</name>
    <name type="common">whales</name>
    <dbReference type="NCBI Taxonomy" id="9721"/>
</organismHost>
<organismHost>
    <name type="scientific">Homo sapiens</name>
    <name type="common">Human</name>
    <dbReference type="NCBI Taxonomy" id="9606"/>
</organismHost>
<organismHost>
    <name type="scientific">Phocidae</name>
    <name type="common">true seals</name>
    <dbReference type="NCBI Taxonomy" id="9709"/>
</organismHost>
<organismHost>
    <name type="scientific">Sus scrofa</name>
    <name type="common">Pig</name>
    <dbReference type="NCBI Taxonomy" id="9823"/>
</organismHost>
<gene>
    <name type="primary">PA</name>
</gene>
<accession>P0DJT4</accession>